<accession>Q3SQJ9</accession>
<keyword id="KW-0997">Cell inner membrane</keyword>
<keyword id="KW-1003">Cell membrane</keyword>
<keyword id="KW-0328">Glycosyltransferase</keyword>
<keyword id="KW-0460">Magnesium</keyword>
<keyword id="KW-0472">Membrane</keyword>
<keyword id="KW-0479">Metal-binding</keyword>
<keyword id="KW-0660">Purine salvage</keyword>
<keyword id="KW-1185">Reference proteome</keyword>
<keyword id="KW-0808">Transferase</keyword>
<protein>
    <recommendedName>
        <fullName evidence="1">Xanthine-guanine phosphoribosyltransferase</fullName>
        <shortName evidence="1">XGPRT</shortName>
        <ecNumber evidence="1">2.4.2.-</ecNumber>
        <ecNumber evidence="1">2.4.2.22</ecNumber>
    </recommendedName>
    <alternativeName>
        <fullName evidence="1">Xanthine phosphoribosyltransferase</fullName>
    </alternativeName>
</protein>
<proteinExistence type="inferred from homology"/>
<gene>
    <name evidence="1" type="primary">gpt</name>
    <name type="ordered locus">Nwi_2188</name>
</gene>
<organism>
    <name type="scientific">Nitrobacter winogradskyi (strain ATCC 25391 / DSM 10237 / CIP 104748 / NCIMB 11846 / Nb-255)</name>
    <dbReference type="NCBI Taxonomy" id="323098"/>
    <lineage>
        <taxon>Bacteria</taxon>
        <taxon>Pseudomonadati</taxon>
        <taxon>Pseudomonadota</taxon>
        <taxon>Alphaproteobacteria</taxon>
        <taxon>Hyphomicrobiales</taxon>
        <taxon>Nitrobacteraceae</taxon>
        <taxon>Nitrobacter</taxon>
    </lineage>
</organism>
<dbReference type="EC" id="2.4.2.-" evidence="1"/>
<dbReference type="EC" id="2.4.2.22" evidence="1"/>
<dbReference type="EMBL" id="CP000115">
    <property type="protein sequence ID" value="ABA05442.1"/>
    <property type="molecule type" value="Genomic_DNA"/>
</dbReference>
<dbReference type="RefSeq" id="WP_011315411.1">
    <property type="nucleotide sequence ID" value="NC_007406.1"/>
</dbReference>
<dbReference type="SMR" id="Q3SQJ9"/>
<dbReference type="STRING" id="323098.Nwi_2188"/>
<dbReference type="KEGG" id="nwi:Nwi_2188"/>
<dbReference type="eggNOG" id="COG2236">
    <property type="taxonomic scope" value="Bacteria"/>
</dbReference>
<dbReference type="HOGENOM" id="CLU_080904_3_0_5"/>
<dbReference type="OrthoDB" id="9789690at2"/>
<dbReference type="UniPathway" id="UPA00602">
    <property type="reaction ID" value="UER00658"/>
</dbReference>
<dbReference type="UniPathway" id="UPA00909">
    <property type="reaction ID" value="UER00887"/>
</dbReference>
<dbReference type="Proteomes" id="UP000002531">
    <property type="component" value="Chromosome"/>
</dbReference>
<dbReference type="GO" id="GO:0005886">
    <property type="term" value="C:plasma membrane"/>
    <property type="evidence" value="ECO:0007669"/>
    <property type="project" value="UniProtKB-SubCell"/>
</dbReference>
<dbReference type="GO" id="GO:0052657">
    <property type="term" value="F:guanine phosphoribosyltransferase activity"/>
    <property type="evidence" value="ECO:0007669"/>
    <property type="project" value="RHEA"/>
</dbReference>
<dbReference type="GO" id="GO:0004422">
    <property type="term" value="F:hypoxanthine phosphoribosyltransferase activity"/>
    <property type="evidence" value="ECO:0007669"/>
    <property type="project" value="RHEA"/>
</dbReference>
<dbReference type="GO" id="GO:0000287">
    <property type="term" value="F:magnesium ion binding"/>
    <property type="evidence" value="ECO:0007669"/>
    <property type="project" value="UniProtKB-UniRule"/>
</dbReference>
<dbReference type="GO" id="GO:0000310">
    <property type="term" value="F:xanthine phosphoribosyltransferase activity"/>
    <property type="evidence" value="ECO:0007669"/>
    <property type="project" value="UniProtKB-UniRule"/>
</dbReference>
<dbReference type="GO" id="GO:0032263">
    <property type="term" value="P:GMP salvage"/>
    <property type="evidence" value="ECO:0007669"/>
    <property type="project" value="UniProtKB-UniRule"/>
</dbReference>
<dbReference type="GO" id="GO:0006166">
    <property type="term" value="P:purine ribonucleoside salvage"/>
    <property type="evidence" value="ECO:0007669"/>
    <property type="project" value="UniProtKB-KW"/>
</dbReference>
<dbReference type="GO" id="GO:0032265">
    <property type="term" value="P:XMP salvage"/>
    <property type="evidence" value="ECO:0007669"/>
    <property type="project" value="UniProtKB-UniRule"/>
</dbReference>
<dbReference type="CDD" id="cd06223">
    <property type="entry name" value="PRTases_typeI"/>
    <property type="match status" value="1"/>
</dbReference>
<dbReference type="Gene3D" id="3.40.50.2020">
    <property type="match status" value="1"/>
</dbReference>
<dbReference type="HAMAP" id="MF_01903">
    <property type="entry name" value="XGPRT"/>
    <property type="match status" value="1"/>
</dbReference>
<dbReference type="InterPro" id="IPR000836">
    <property type="entry name" value="PRibTrfase_dom"/>
</dbReference>
<dbReference type="InterPro" id="IPR029057">
    <property type="entry name" value="PRTase-like"/>
</dbReference>
<dbReference type="InterPro" id="IPR023747">
    <property type="entry name" value="Xanthine_Guanine_PRibTrfase"/>
</dbReference>
<dbReference type="NCBIfam" id="NF006613">
    <property type="entry name" value="PRK09177.1"/>
    <property type="match status" value="1"/>
</dbReference>
<dbReference type="PANTHER" id="PTHR39563">
    <property type="entry name" value="XANTHINE PHOSPHORIBOSYLTRANSFERASE"/>
    <property type="match status" value="1"/>
</dbReference>
<dbReference type="PANTHER" id="PTHR39563:SF1">
    <property type="entry name" value="XANTHINE-GUANINE PHOSPHORIBOSYLTRANSFERASE"/>
    <property type="match status" value="1"/>
</dbReference>
<dbReference type="Pfam" id="PF00156">
    <property type="entry name" value="Pribosyltran"/>
    <property type="match status" value="1"/>
</dbReference>
<dbReference type="SUPFAM" id="SSF53271">
    <property type="entry name" value="PRTase-like"/>
    <property type="match status" value="1"/>
</dbReference>
<dbReference type="PROSITE" id="PS00103">
    <property type="entry name" value="PUR_PYR_PR_TRANSFER"/>
    <property type="match status" value="1"/>
</dbReference>
<feature type="chain" id="PRO_0000139676" description="Xanthine-guanine phosphoribosyltransferase">
    <location>
        <begin position="1"/>
        <end position="168"/>
    </location>
</feature>
<feature type="binding site" evidence="1">
    <location>
        <begin position="43"/>
        <end position="44"/>
    </location>
    <ligand>
        <name>5-phospho-alpha-D-ribose 1-diphosphate</name>
        <dbReference type="ChEBI" id="CHEBI:58017"/>
    </ligand>
</feature>
<feature type="binding site" evidence="1">
    <location>
        <begin position="102"/>
        <end position="110"/>
    </location>
    <ligand>
        <name>5-phospho-alpha-D-ribose 1-diphosphate</name>
        <dbReference type="ChEBI" id="CHEBI:58017"/>
    </ligand>
</feature>
<feature type="binding site" evidence="1">
    <location>
        <position position="103"/>
    </location>
    <ligand>
        <name>Mg(2+)</name>
        <dbReference type="ChEBI" id="CHEBI:18420"/>
    </ligand>
</feature>
<feature type="binding site" evidence="1">
    <location>
        <begin position="106"/>
        <end position="110"/>
    </location>
    <ligand>
        <name>GMP</name>
        <dbReference type="ChEBI" id="CHEBI:58115"/>
    </ligand>
</feature>
<feature type="binding site" evidence="1">
    <location>
        <position position="106"/>
    </location>
    <ligand>
        <name>guanine</name>
        <dbReference type="ChEBI" id="CHEBI:16235"/>
    </ligand>
</feature>
<feature type="binding site" evidence="1">
    <location>
        <position position="106"/>
    </location>
    <ligand>
        <name>xanthine</name>
        <dbReference type="ChEBI" id="CHEBI:17712"/>
    </ligand>
</feature>
<feature type="binding site" evidence="1">
    <location>
        <begin position="148"/>
        <end position="149"/>
    </location>
    <ligand>
        <name>GMP</name>
        <dbReference type="ChEBI" id="CHEBI:58115"/>
    </ligand>
</feature>
<feature type="binding site" evidence="1">
    <location>
        <position position="149"/>
    </location>
    <ligand>
        <name>guanine</name>
        <dbReference type="ChEBI" id="CHEBI:16235"/>
    </ligand>
</feature>
<feature type="binding site" evidence="1">
    <location>
        <position position="149"/>
    </location>
    <ligand>
        <name>xanthine</name>
        <dbReference type="ChEBI" id="CHEBI:17712"/>
    </ligand>
</feature>
<sequence length="168" mass="18321">MSAHKTPDKAFPVSWDQFHRDCRALSWRLNETGPFHAVVAITRGGLVPAAIVARELGVRVIDTVCIASYDHLHKSELKVLKGISDMTVKLGGGSGRNLLVVDDLVDTGATARVVRGMIPDAHFATVYAKPLGKPLVDTFITEVSQDTWIYFPWDLDLAFAPPLRDGAA</sequence>
<name>XGPT_NITWN</name>
<evidence type="ECO:0000255" key="1">
    <source>
        <dbReference type="HAMAP-Rule" id="MF_01903"/>
    </source>
</evidence>
<comment type="function">
    <text evidence="1">Purine salvage pathway enzyme that catalyzes the transfer of the ribosyl-5-phosphate group from 5-phospho-alpha-D-ribose 1-diphosphate (PRPP) to the N9 position of the 6-oxopurines guanine and xanthine to form the corresponding ribonucleotides GMP (guanosine 5'-monophosphate) and XMP (xanthosine 5'-monophosphate), with the release of PPi. To a lesser extent, also acts on hypoxanthine.</text>
</comment>
<comment type="catalytic activity">
    <reaction evidence="1">
        <text>GMP + diphosphate = guanine + 5-phospho-alpha-D-ribose 1-diphosphate</text>
        <dbReference type="Rhea" id="RHEA:25424"/>
        <dbReference type="ChEBI" id="CHEBI:16235"/>
        <dbReference type="ChEBI" id="CHEBI:33019"/>
        <dbReference type="ChEBI" id="CHEBI:58017"/>
        <dbReference type="ChEBI" id="CHEBI:58115"/>
    </reaction>
    <physiologicalReaction direction="right-to-left" evidence="1">
        <dbReference type="Rhea" id="RHEA:25426"/>
    </physiologicalReaction>
</comment>
<comment type="catalytic activity">
    <reaction evidence="1">
        <text>XMP + diphosphate = xanthine + 5-phospho-alpha-D-ribose 1-diphosphate</text>
        <dbReference type="Rhea" id="RHEA:10800"/>
        <dbReference type="ChEBI" id="CHEBI:17712"/>
        <dbReference type="ChEBI" id="CHEBI:33019"/>
        <dbReference type="ChEBI" id="CHEBI:57464"/>
        <dbReference type="ChEBI" id="CHEBI:58017"/>
        <dbReference type="EC" id="2.4.2.22"/>
    </reaction>
    <physiologicalReaction direction="right-to-left" evidence="1">
        <dbReference type="Rhea" id="RHEA:10802"/>
    </physiologicalReaction>
</comment>
<comment type="catalytic activity">
    <reaction evidence="1">
        <text>IMP + diphosphate = hypoxanthine + 5-phospho-alpha-D-ribose 1-diphosphate</text>
        <dbReference type="Rhea" id="RHEA:17973"/>
        <dbReference type="ChEBI" id="CHEBI:17368"/>
        <dbReference type="ChEBI" id="CHEBI:33019"/>
        <dbReference type="ChEBI" id="CHEBI:58017"/>
        <dbReference type="ChEBI" id="CHEBI:58053"/>
    </reaction>
    <physiologicalReaction direction="right-to-left" evidence="1">
        <dbReference type="Rhea" id="RHEA:17975"/>
    </physiologicalReaction>
</comment>
<comment type="cofactor">
    <cofactor evidence="1">
        <name>Mg(2+)</name>
        <dbReference type="ChEBI" id="CHEBI:18420"/>
    </cofactor>
</comment>
<comment type="pathway">
    <text evidence="1">Purine metabolism; GMP biosynthesis via salvage pathway; GMP from guanine: step 1/1.</text>
</comment>
<comment type="pathway">
    <text evidence="1">Purine metabolism; XMP biosynthesis via salvage pathway; XMP from xanthine: step 1/1.</text>
</comment>
<comment type="subunit">
    <text evidence="1">Homotetramer.</text>
</comment>
<comment type="subcellular location">
    <subcellularLocation>
        <location evidence="1">Cell inner membrane</location>
        <topology evidence="1">Peripheral membrane protein</topology>
    </subcellularLocation>
</comment>
<comment type="similarity">
    <text evidence="1">Belongs to the purine/pyrimidine phosphoribosyltransferase family. XGPT subfamily.</text>
</comment>
<reference key="1">
    <citation type="journal article" date="2006" name="Appl. Environ. Microbiol.">
        <title>Genome sequence of the chemolithoautotrophic nitrite-oxidizing bacterium Nitrobacter winogradskyi Nb-255.</title>
        <authorList>
            <person name="Starkenburg S.R."/>
            <person name="Chain P.S.G."/>
            <person name="Sayavedra-Soto L.A."/>
            <person name="Hauser L."/>
            <person name="Land M.L."/>
            <person name="Larimer F.W."/>
            <person name="Malfatti S.A."/>
            <person name="Klotz M.G."/>
            <person name="Bottomley P.J."/>
            <person name="Arp D.J."/>
            <person name="Hickey W.J."/>
        </authorList>
    </citation>
    <scope>NUCLEOTIDE SEQUENCE [LARGE SCALE GENOMIC DNA]</scope>
    <source>
        <strain>ATCC 25391 / DSM 10237 / CIP 104748 / NCIMB 11846 / Nb-255</strain>
    </source>
</reference>